<feature type="chain" id="PRO_0000359091" description="Acetyl-coenzyme A carboxylase carboxyl transferase subunit beta 2">
    <location>
        <begin position="1"/>
        <end position="289"/>
    </location>
</feature>
<feature type="domain" description="CoA carboxyltransferase N-terminal" evidence="2">
    <location>
        <begin position="25"/>
        <end position="289"/>
    </location>
</feature>
<feature type="zinc finger region" description="C4-type" evidence="1">
    <location>
        <begin position="29"/>
        <end position="51"/>
    </location>
</feature>
<feature type="binding site" evidence="1">
    <location>
        <position position="29"/>
    </location>
    <ligand>
        <name>Zn(2+)</name>
        <dbReference type="ChEBI" id="CHEBI:29105"/>
    </ligand>
</feature>
<feature type="binding site" evidence="1">
    <location>
        <position position="32"/>
    </location>
    <ligand>
        <name>Zn(2+)</name>
        <dbReference type="ChEBI" id="CHEBI:29105"/>
    </ligand>
</feature>
<feature type="binding site" evidence="1">
    <location>
        <position position="48"/>
    </location>
    <ligand>
        <name>Zn(2+)</name>
        <dbReference type="ChEBI" id="CHEBI:29105"/>
    </ligand>
</feature>
<feature type="binding site" evidence="1">
    <location>
        <position position="51"/>
    </location>
    <ligand>
        <name>Zn(2+)</name>
        <dbReference type="ChEBI" id="CHEBI:29105"/>
    </ligand>
</feature>
<organism>
    <name type="scientific">Vibrio parahaemolyticus serotype O3:K6 (strain RIMD 2210633)</name>
    <dbReference type="NCBI Taxonomy" id="223926"/>
    <lineage>
        <taxon>Bacteria</taxon>
        <taxon>Pseudomonadati</taxon>
        <taxon>Pseudomonadota</taxon>
        <taxon>Gammaproteobacteria</taxon>
        <taxon>Vibrionales</taxon>
        <taxon>Vibrionaceae</taxon>
        <taxon>Vibrio</taxon>
    </lineage>
</organism>
<dbReference type="EC" id="2.1.3.15" evidence="1"/>
<dbReference type="EMBL" id="BA000032">
    <property type="protein sequence ID" value="BAC62138.1"/>
    <property type="molecule type" value="Genomic_DNA"/>
</dbReference>
<dbReference type="RefSeq" id="NP_800305.1">
    <property type="nucleotide sequence ID" value="NC_004605.1"/>
</dbReference>
<dbReference type="SMR" id="Q87I11"/>
<dbReference type="GeneID" id="1191484"/>
<dbReference type="KEGG" id="vpa:VPA0795"/>
<dbReference type="PATRIC" id="fig|223926.6.peg.3726"/>
<dbReference type="eggNOG" id="COG0777">
    <property type="taxonomic scope" value="Bacteria"/>
</dbReference>
<dbReference type="HOGENOM" id="CLU_015486_1_0_6"/>
<dbReference type="UniPathway" id="UPA00655">
    <property type="reaction ID" value="UER00711"/>
</dbReference>
<dbReference type="Proteomes" id="UP000002493">
    <property type="component" value="Chromosome 2"/>
</dbReference>
<dbReference type="GO" id="GO:0009329">
    <property type="term" value="C:acetate CoA-transferase complex"/>
    <property type="evidence" value="ECO:0007669"/>
    <property type="project" value="TreeGrafter"/>
</dbReference>
<dbReference type="GO" id="GO:0003989">
    <property type="term" value="F:acetyl-CoA carboxylase activity"/>
    <property type="evidence" value="ECO:0007669"/>
    <property type="project" value="InterPro"/>
</dbReference>
<dbReference type="GO" id="GO:0005524">
    <property type="term" value="F:ATP binding"/>
    <property type="evidence" value="ECO:0007669"/>
    <property type="project" value="UniProtKB-KW"/>
</dbReference>
<dbReference type="GO" id="GO:0016743">
    <property type="term" value="F:carboxyl- or carbamoyltransferase activity"/>
    <property type="evidence" value="ECO:0007669"/>
    <property type="project" value="UniProtKB-UniRule"/>
</dbReference>
<dbReference type="GO" id="GO:0008270">
    <property type="term" value="F:zinc ion binding"/>
    <property type="evidence" value="ECO:0007669"/>
    <property type="project" value="UniProtKB-UniRule"/>
</dbReference>
<dbReference type="GO" id="GO:0006633">
    <property type="term" value="P:fatty acid biosynthetic process"/>
    <property type="evidence" value="ECO:0007669"/>
    <property type="project" value="UniProtKB-KW"/>
</dbReference>
<dbReference type="GO" id="GO:2001295">
    <property type="term" value="P:malonyl-CoA biosynthetic process"/>
    <property type="evidence" value="ECO:0007669"/>
    <property type="project" value="UniProtKB-UniRule"/>
</dbReference>
<dbReference type="Gene3D" id="3.90.226.10">
    <property type="entry name" value="2-enoyl-CoA Hydratase, Chain A, domain 1"/>
    <property type="match status" value="1"/>
</dbReference>
<dbReference type="HAMAP" id="MF_01395">
    <property type="entry name" value="AcetylCoA_CT_beta"/>
    <property type="match status" value="1"/>
</dbReference>
<dbReference type="InterPro" id="IPR034733">
    <property type="entry name" value="AcCoA_carboxyl_beta"/>
</dbReference>
<dbReference type="InterPro" id="IPR000438">
    <property type="entry name" value="Acetyl_CoA_COase_Trfase_b_su"/>
</dbReference>
<dbReference type="InterPro" id="IPR029045">
    <property type="entry name" value="ClpP/crotonase-like_dom_sf"/>
</dbReference>
<dbReference type="InterPro" id="IPR011762">
    <property type="entry name" value="COA_CT_N"/>
</dbReference>
<dbReference type="InterPro" id="IPR041010">
    <property type="entry name" value="Znf-ACC"/>
</dbReference>
<dbReference type="NCBIfam" id="TIGR00515">
    <property type="entry name" value="accD"/>
    <property type="match status" value="1"/>
</dbReference>
<dbReference type="PANTHER" id="PTHR42995">
    <property type="entry name" value="ACETYL-COENZYME A CARBOXYLASE CARBOXYL TRANSFERASE SUBUNIT BETA, CHLOROPLASTIC"/>
    <property type="match status" value="1"/>
</dbReference>
<dbReference type="PANTHER" id="PTHR42995:SF5">
    <property type="entry name" value="ACETYL-COENZYME A CARBOXYLASE CARBOXYL TRANSFERASE SUBUNIT BETA, CHLOROPLASTIC"/>
    <property type="match status" value="1"/>
</dbReference>
<dbReference type="Pfam" id="PF01039">
    <property type="entry name" value="Carboxyl_trans"/>
    <property type="match status" value="1"/>
</dbReference>
<dbReference type="Pfam" id="PF17848">
    <property type="entry name" value="Zn_ribbon_ACC"/>
    <property type="match status" value="1"/>
</dbReference>
<dbReference type="PRINTS" id="PR01070">
    <property type="entry name" value="ACCCTRFRASEB"/>
</dbReference>
<dbReference type="SUPFAM" id="SSF52096">
    <property type="entry name" value="ClpP/crotonase"/>
    <property type="match status" value="1"/>
</dbReference>
<dbReference type="PROSITE" id="PS50980">
    <property type="entry name" value="COA_CT_NTER"/>
    <property type="match status" value="1"/>
</dbReference>
<sequence>MSWLEKLLDKKNIINTRKASIPEGVWTKCPSCDQVLYRIALKENLEVCPKCQHHLRMSARHRLDGFLDKGERIELASEYEPKDLLNFKDKKRYKERLALSQKSTGEKDALVVMKGELLGLPIVACAFEFSFMAGSMGSVVGARFVDAVDTAIEENCGLVCFSACGGARMQESLMALMQMAKTSAALERLSNARLPYISVLTDQTFGGVSASLAMLGDINIGEPEARIGFAGRRVIEQTVREKLPDGFQQSEFLLEHGALDMIVQRHDMRERIGGLIAKLTNTSIRLEVK</sequence>
<protein>
    <recommendedName>
        <fullName evidence="1">Acetyl-coenzyme A carboxylase carboxyl transferase subunit beta 2</fullName>
        <shortName evidence="1">ACCase subunit beta 2</shortName>
        <shortName evidence="1">Acetyl-CoA carboxylase carboxyltransferase subunit beta 2</shortName>
        <ecNumber evidence="1">2.1.3.15</ecNumber>
    </recommendedName>
</protein>
<name>ACCD2_VIBPA</name>
<gene>
    <name evidence="1" type="primary">accD2</name>
    <name type="ordered locus">VPA0795</name>
</gene>
<reference key="1">
    <citation type="journal article" date="2003" name="Lancet">
        <title>Genome sequence of Vibrio parahaemolyticus: a pathogenic mechanism distinct from that of V. cholerae.</title>
        <authorList>
            <person name="Makino K."/>
            <person name="Oshima K."/>
            <person name="Kurokawa K."/>
            <person name="Yokoyama K."/>
            <person name="Uda T."/>
            <person name="Tagomori K."/>
            <person name="Iijima Y."/>
            <person name="Najima M."/>
            <person name="Nakano M."/>
            <person name="Yamashita A."/>
            <person name="Kubota Y."/>
            <person name="Kimura S."/>
            <person name="Yasunaga T."/>
            <person name="Honda T."/>
            <person name="Shinagawa H."/>
            <person name="Hattori M."/>
            <person name="Iida T."/>
        </authorList>
    </citation>
    <scope>NUCLEOTIDE SEQUENCE [LARGE SCALE GENOMIC DNA]</scope>
    <source>
        <strain>RIMD 2210633</strain>
    </source>
</reference>
<evidence type="ECO:0000255" key="1">
    <source>
        <dbReference type="HAMAP-Rule" id="MF_01395"/>
    </source>
</evidence>
<evidence type="ECO:0000255" key="2">
    <source>
        <dbReference type="PROSITE-ProRule" id="PRU01136"/>
    </source>
</evidence>
<accession>Q87I11</accession>
<keyword id="KW-0067">ATP-binding</keyword>
<keyword id="KW-0963">Cytoplasm</keyword>
<keyword id="KW-0275">Fatty acid biosynthesis</keyword>
<keyword id="KW-0276">Fatty acid metabolism</keyword>
<keyword id="KW-0444">Lipid biosynthesis</keyword>
<keyword id="KW-0443">Lipid metabolism</keyword>
<keyword id="KW-0479">Metal-binding</keyword>
<keyword id="KW-0547">Nucleotide-binding</keyword>
<keyword id="KW-0808">Transferase</keyword>
<keyword id="KW-0862">Zinc</keyword>
<keyword id="KW-0863">Zinc-finger</keyword>
<comment type="function">
    <text evidence="1">Component of the acetyl coenzyme A carboxylase (ACC) complex. Biotin carboxylase (BC) catalyzes the carboxylation of biotin on its carrier protein (BCCP) and then the CO(2) group is transferred by the transcarboxylase to acetyl-CoA to form malonyl-CoA.</text>
</comment>
<comment type="catalytic activity">
    <reaction evidence="1">
        <text>N(6)-carboxybiotinyl-L-lysyl-[protein] + acetyl-CoA = N(6)-biotinyl-L-lysyl-[protein] + malonyl-CoA</text>
        <dbReference type="Rhea" id="RHEA:54728"/>
        <dbReference type="Rhea" id="RHEA-COMP:10505"/>
        <dbReference type="Rhea" id="RHEA-COMP:10506"/>
        <dbReference type="ChEBI" id="CHEBI:57288"/>
        <dbReference type="ChEBI" id="CHEBI:57384"/>
        <dbReference type="ChEBI" id="CHEBI:83144"/>
        <dbReference type="ChEBI" id="CHEBI:83145"/>
        <dbReference type="EC" id="2.1.3.15"/>
    </reaction>
</comment>
<comment type="cofactor">
    <cofactor evidence="1">
        <name>Zn(2+)</name>
        <dbReference type="ChEBI" id="CHEBI:29105"/>
    </cofactor>
    <text evidence="1">Binds 1 zinc ion per subunit.</text>
</comment>
<comment type="pathway">
    <text evidence="1">Lipid metabolism; malonyl-CoA biosynthesis; malonyl-CoA from acetyl-CoA: step 1/1.</text>
</comment>
<comment type="subunit">
    <text evidence="1">Acetyl-CoA carboxylase is a heterohexamer composed of biotin carboxyl carrier protein (AccB), biotin carboxylase (AccC) and two subunits each of ACCase subunit alpha (AccA) and ACCase subunit beta (AccD).</text>
</comment>
<comment type="subcellular location">
    <subcellularLocation>
        <location evidence="1">Cytoplasm</location>
    </subcellularLocation>
</comment>
<comment type="similarity">
    <text evidence="1">Belongs to the AccD/PCCB family.</text>
</comment>
<proteinExistence type="inferred from homology"/>